<evidence type="ECO:0000255" key="1">
    <source>
        <dbReference type="HAMAP-Rule" id="MF_01418"/>
    </source>
</evidence>
<comment type="function">
    <text evidence="1">Catalyzes the formation of putrescine from agmatine.</text>
</comment>
<comment type="catalytic activity">
    <reaction evidence="1">
        <text>agmatine + H2O = urea + putrescine</text>
        <dbReference type="Rhea" id="RHEA:13929"/>
        <dbReference type="ChEBI" id="CHEBI:15377"/>
        <dbReference type="ChEBI" id="CHEBI:16199"/>
        <dbReference type="ChEBI" id="CHEBI:58145"/>
        <dbReference type="ChEBI" id="CHEBI:326268"/>
        <dbReference type="EC" id="3.5.3.11"/>
    </reaction>
</comment>
<comment type="cofactor">
    <cofactor evidence="1">
        <name>Mn(2+)</name>
        <dbReference type="ChEBI" id="CHEBI:29035"/>
    </cofactor>
</comment>
<comment type="pathway">
    <text evidence="1">Amine and polyamine biosynthesis; putrescine biosynthesis via agmatine pathway; putrescine from agmatine: step 1/1.</text>
</comment>
<comment type="similarity">
    <text evidence="1">Belongs to the arginase family. Agmatinase subfamily.</text>
</comment>
<feature type="chain" id="PRO_1000087412" description="Agmatinase">
    <location>
        <begin position="1"/>
        <end position="306"/>
    </location>
</feature>
<feature type="binding site" evidence="1">
    <location>
        <position position="126"/>
    </location>
    <ligand>
        <name>Mn(2+)</name>
        <dbReference type="ChEBI" id="CHEBI:29035"/>
    </ligand>
</feature>
<feature type="binding site" evidence="1">
    <location>
        <position position="149"/>
    </location>
    <ligand>
        <name>Mn(2+)</name>
        <dbReference type="ChEBI" id="CHEBI:29035"/>
    </ligand>
</feature>
<feature type="binding site" evidence="1">
    <location>
        <position position="151"/>
    </location>
    <ligand>
        <name>Mn(2+)</name>
        <dbReference type="ChEBI" id="CHEBI:29035"/>
    </ligand>
</feature>
<feature type="binding site" evidence="1">
    <location>
        <position position="153"/>
    </location>
    <ligand>
        <name>Mn(2+)</name>
        <dbReference type="ChEBI" id="CHEBI:29035"/>
    </ligand>
</feature>
<feature type="binding site" evidence="1">
    <location>
        <position position="230"/>
    </location>
    <ligand>
        <name>Mn(2+)</name>
        <dbReference type="ChEBI" id="CHEBI:29035"/>
    </ligand>
</feature>
<feature type="binding site" evidence="1">
    <location>
        <position position="232"/>
    </location>
    <ligand>
        <name>Mn(2+)</name>
        <dbReference type="ChEBI" id="CHEBI:29035"/>
    </ligand>
</feature>
<name>SPEB_SALPB</name>
<reference key="1">
    <citation type="submission" date="2007-11" db="EMBL/GenBank/DDBJ databases">
        <authorList>
            <consortium name="The Salmonella enterica serovar Paratyphi B Genome Sequencing Project"/>
            <person name="McClelland M."/>
            <person name="Sanderson E.K."/>
            <person name="Porwollik S."/>
            <person name="Spieth J."/>
            <person name="Clifton W.S."/>
            <person name="Fulton R."/>
            <person name="Cordes M."/>
            <person name="Wollam A."/>
            <person name="Shah N."/>
            <person name="Pepin K."/>
            <person name="Bhonagiri V."/>
            <person name="Nash W."/>
            <person name="Johnson M."/>
            <person name="Thiruvilangam P."/>
            <person name="Wilson R."/>
        </authorList>
    </citation>
    <scope>NUCLEOTIDE SEQUENCE [LARGE SCALE GENOMIC DNA]</scope>
    <source>
        <strain>ATCC BAA-1250 / SPB7</strain>
    </source>
</reference>
<organism>
    <name type="scientific">Salmonella paratyphi B (strain ATCC BAA-1250 / SPB7)</name>
    <dbReference type="NCBI Taxonomy" id="1016998"/>
    <lineage>
        <taxon>Bacteria</taxon>
        <taxon>Pseudomonadati</taxon>
        <taxon>Pseudomonadota</taxon>
        <taxon>Gammaproteobacteria</taxon>
        <taxon>Enterobacterales</taxon>
        <taxon>Enterobacteriaceae</taxon>
        <taxon>Salmonella</taxon>
    </lineage>
</organism>
<accession>A9N3R6</accession>
<protein>
    <recommendedName>
        <fullName evidence="1">Agmatinase</fullName>
        <ecNumber evidence="1">3.5.3.11</ecNumber>
    </recommendedName>
    <alternativeName>
        <fullName evidence="1">Agmatine ureohydrolase</fullName>
        <shortName evidence="1">AUH</shortName>
    </alternativeName>
</protein>
<sequence>MSTLGHQYDNSLVSNAFGFLRLPMNFQPYDSDADWVITGVPFDMATSGRAGGRHGPAAIRQVSTNLAWEHHRFPWNFDMRERLNVVDCGDLVYAFGDAREMSEKLQAHAEKLLSAGKRMLSFGGDHFVTLPLLRAHAKHFGKMALVHFDAHTDTYANGCEFDHGTMFYTAPKEGLIDPHHSVQIGIRTEFDKDNGFTVLDACQVNDRGVDDILAQVKQIVGDMPVYLTFDIDCLDPAFAPGTGTPVIGGLTSDRAIKLVRGLKDLNIVGMDVVEVAPAYDQSEITALAAATLALEMLYIQAAKKGE</sequence>
<keyword id="KW-0378">Hydrolase</keyword>
<keyword id="KW-0464">Manganese</keyword>
<keyword id="KW-0479">Metal-binding</keyword>
<keyword id="KW-0620">Polyamine biosynthesis</keyword>
<keyword id="KW-0661">Putrescine biosynthesis</keyword>
<keyword id="KW-0745">Spermidine biosynthesis</keyword>
<proteinExistence type="inferred from homology"/>
<dbReference type="EC" id="3.5.3.11" evidence="1"/>
<dbReference type="EMBL" id="CP000886">
    <property type="protein sequence ID" value="ABX69169.1"/>
    <property type="molecule type" value="Genomic_DNA"/>
</dbReference>
<dbReference type="RefSeq" id="WP_000105550.1">
    <property type="nucleotide sequence ID" value="NC_010102.1"/>
</dbReference>
<dbReference type="SMR" id="A9N3R6"/>
<dbReference type="KEGG" id="spq:SPAB_03838"/>
<dbReference type="PATRIC" id="fig|1016998.12.peg.3617"/>
<dbReference type="HOGENOM" id="CLU_039478_0_0_6"/>
<dbReference type="BioCyc" id="SENT1016998:SPAB_RS15600-MONOMER"/>
<dbReference type="UniPathway" id="UPA00534">
    <property type="reaction ID" value="UER00287"/>
</dbReference>
<dbReference type="Proteomes" id="UP000008556">
    <property type="component" value="Chromosome"/>
</dbReference>
<dbReference type="GO" id="GO:0008783">
    <property type="term" value="F:agmatinase activity"/>
    <property type="evidence" value="ECO:0007669"/>
    <property type="project" value="UniProtKB-UniRule"/>
</dbReference>
<dbReference type="GO" id="GO:0030145">
    <property type="term" value="F:manganese ion binding"/>
    <property type="evidence" value="ECO:0007669"/>
    <property type="project" value="InterPro"/>
</dbReference>
<dbReference type="GO" id="GO:0033389">
    <property type="term" value="P:putrescine biosynthetic process from arginine, via agmatine"/>
    <property type="evidence" value="ECO:0007669"/>
    <property type="project" value="TreeGrafter"/>
</dbReference>
<dbReference type="GO" id="GO:0008295">
    <property type="term" value="P:spermidine biosynthetic process"/>
    <property type="evidence" value="ECO:0007669"/>
    <property type="project" value="UniProtKB-UniRule"/>
</dbReference>
<dbReference type="CDD" id="cd11592">
    <property type="entry name" value="Agmatinase_PAH"/>
    <property type="match status" value="1"/>
</dbReference>
<dbReference type="FunFam" id="3.40.800.10:FF:000001">
    <property type="entry name" value="Agmatinase"/>
    <property type="match status" value="1"/>
</dbReference>
<dbReference type="Gene3D" id="3.40.800.10">
    <property type="entry name" value="Ureohydrolase domain"/>
    <property type="match status" value="1"/>
</dbReference>
<dbReference type="HAMAP" id="MF_01418">
    <property type="entry name" value="SpeB"/>
    <property type="match status" value="1"/>
</dbReference>
<dbReference type="InterPro" id="IPR023694">
    <property type="entry name" value="Agmatinase"/>
</dbReference>
<dbReference type="InterPro" id="IPR005925">
    <property type="entry name" value="Agmatinase-rel"/>
</dbReference>
<dbReference type="InterPro" id="IPR006035">
    <property type="entry name" value="Ureohydrolase"/>
</dbReference>
<dbReference type="InterPro" id="IPR023696">
    <property type="entry name" value="Ureohydrolase_dom_sf"/>
</dbReference>
<dbReference type="InterPro" id="IPR020855">
    <property type="entry name" value="Ureohydrolase_Mn_BS"/>
</dbReference>
<dbReference type="NCBIfam" id="TIGR01230">
    <property type="entry name" value="agmatinase"/>
    <property type="match status" value="1"/>
</dbReference>
<dbReference type="NCBIfam" id="NF002564">
    <property type="entry name" value="PRK02190.1"/>
    <property type="match status" value="1"/>
</dbReference>
<dbReference type="PANTHER" id="PTHR11358">
    <property type="entry name" value="ARGINASE/AGMATINASE"/>
    <property type="match status" value="1"/>
</dbReference>
<dbReference type="PANTHER" id="PTHR11358:SF26">
    <property type="entry name" value="GUANIDINO ACID HYDROLASE, MITOCHONDRIAL"/>
    <property type="match status" value="1"/>
</dbReference>
<dbReference type="Pfam" id="PF00491">
    <property type="entry name" value="Arginase"/>
    <property type="match status" value="1"/>
</dbReference>
<dbReference type="PIRSF" id="PIRSF036979">
    <property type="entry name" value="Arginase"/>
    <property type="match status" value="1"/>
</dbReference>
<dbReference type="SUPFAM" id="SSF52768">
    <property type="entry name" value="Arginase/deacetylase"/>
    <property type="match status" value="1"/>
</dbReference>
<dbReference type="PROSITE" id="PS01053">
    <property type="entry name" value="ARGINASE_1"/>
    <property type="match status" value="1"/>
</dbReference>
<dbReference type="PROSITE" id="PS51409">
    <property type="entry name" value="ARGINASE_2"/>
    <property type="match status" value="1"/>
</dbReference>
<gene>
    <name evidence="1" type="primary">speB</name>
    <name type="ordered locus">SPAB_03838</name>
</gene>